<proteinExistence type="inferred from homology"/>
<protein>
    <recommendedName>
        <fullName evidence="1">Formate--tetrahydrofolate ligase</fullName>
        <ecNumber evidence="1">6.3.4.3</ecNumber>
    </recommendedName>
    <alternativeName>
        <fullName evidence="1">Formyltetrahydrofolate synthetase</fullName>
        <shortName evidence="1">FHS</shortName>
        <shortName evidence="1">FTHFS</shortName>
    </alternativeName>
</protein>
<reference key="1">
    <citation type="journal article" date="2009" name="Appl. Environ. Microbiol.">
        <title>Genomic analysis of 'Elusimicrobium minutum,' the first cultivated representative of the phylum 'Elusimicrobia' (formerly termite group 1).</title>
        <authorList>
            <person name="Herlemann D.P.R."/>
            <person name="Geissinger O."/>
            <person name="Ikeda-Ohtsubo W."/>
            <person name="Kunin V."/>
            <person name="Sun H."/>
            <person name="Lapidus A."/>
            <person name="Hugenholtz P."/>
            <person name="Brune A."/>
        </authorList>
    </citation>
    <scope>NUCLEOTIDE SEQUENCE [LARGE SCALE GENOMIC DNA]</scope>
    <source>
        <strain>Pei191</strain>
    </source>
</reference>
<evidence type="ECO:0000255" key="1">
    <source>
        <dbReference type="HAMAP-Rule" id="MF_01543"/>
    </source>
</evidence>
<sequence>MLSDIEIAQRAKVWPIAKVAVKLGIKKSQIELYGHYKAKLSFDCIKKLQKKPDGNLILVTAISPTAAGEGKSTTTVGLAQALAKIGKKAIVALREPSLGPCMGIKGGAAGGGYSQVVPMEDINLHFTGDMHAITAANNLLSAIIDNHIHQGNELGIDERRIVWHRVVDINDRALRNIVVALGGKGNGFPREDSFDITVASEVMAILCLSESLADLKKRLSKVIVGYNFADKPVTAGMLKAEGAMAALLKDAIKPNLVQTLENVPAIIHGGPFANIAHGCNSVIATKTALKLADYIVTEAGFGADLGAEKFFNIKCRYAGLTPKVAIIVATVRALKMHGGVSKDKLTHLDKQAVIRGLVNLDKHIENVKKFGVPPVVAINIFSGDSKEEIAAVKAHCKKIGVPVELSDVFAKGGEGGIQLAKKVVDIISKNKSKFRFTYESEDSLEEKTKKIVKNIYGAKDVFFDKKALDSIKKYEAMGFGNIPVCMAKTQYSFSDNPKLYGRPEGFTIEVREARISAGAGFVVMLTGNIMTMPGLPKFPAAEKIDISSEGVIKGLS</sequence>
<accession>B2KDK9</accession>
<comment type="catalytic activity">
    <reaction evidence="1">
        <text>(6S)-5,6,7,8-tetrahydrofolate + formate + ATP = (6R)-10-formyltetrahydrofolate + ADP + phosphate</text>
        <dbReference type="Rhea" id="RHEA:20221"/>
        <dbReference type="ChEBI" id="CHEBI:15740"/>
        <dbReference type="ChEBI" id="CHEBI:30616"/>
        <dbReference type="ChEBI" id="CHEBI:43474"/>
        <dbReference type="ChEBI" id="CHEBI:57453"/>
        <dbReference type="ChEBI" id="CHEBI:195366"/>
        <dbReference type="ChEBI" id="CHEBI:456216"/>
        <dbReference type="EC" id="6.3.4.3"/>
    </reaction>
</comment>
<comment type="pathway">
    <text evidence="1">One-carbon metabolism; tetrahydrofolate interconversion.</text>
</comment>
<comment type="similarity">
    <text evidence="1">Belongs to the formate--tetrahydrofolate ligase family.</text>
</comment>
<organism>
    <name type="scientific">Elusimicrobium minutum (strain Pei191)</name>
    <dbReference type="NCBI Taxonomy" id="445932"/>
    <lineage>
        <taxon>Bacteria</taxon>
        <taxon>Pseudomonadati</taxon>
        <taxon>Elusimicrobiota</taxon>
        <taxon>Elusimicrobia</taxon>
        <taxon>Elusimicrobiales</taxon>
        <taxon>Elusimicrobiaceae</taxon>
        <taxon>Elusimicrobium</taxon>
    </lineage>
</organism>
<dbReference type="EC" id="6.3.4.3" evidence="1"/>
<dbReference type="EMBL" id="CP001055">
    <property type="protein sequence ID" value="ACC98605.1"/>
    <property type="molecule type" value="Genomic_DNA"/>
</dbReference>
<dbReference type="RefSeq" id="WP_012415220.1">
    <property type="nucleotide sequence ID" value="NC_010644.1"/>
</dbReference>
<dbReference type="SMR" id="B2KDK9"/>
<dbReference type="STRING" id="445932.Emin_1052"/>
<dbReference type="KEGG" id="emi:Emin_1052"/>
<dbReference type="HOGENOM" id="CLU_003601_3_3_0"/>
<dbReference type="OrthoDB" id="9761733at2"/>
<dbReference type="UniPathway" id="UPA00193"/>
<dbReference type="Proteomes" id="UP000001029">
    <property type="component" value="Chromosome"/>
</dbReference>
<dbReference type="GO" id="GO:0005524">
    <property type="term" value="F:ATP binding"/>
    <property type="evidence" value="ECO:0007669"/>
    <property type="project" value="UniProtKB-UniRule"/>
</dbReference>
<dbReference type="GO" id="GO:0004329">
    <property type="term" value="F:formate-tetrahydrofolate ligase activity"/>
    <property type="evidence" value="ECO:0007669"/>
    <property type="project" value="UniProtKB-UniRule"/>
</dbReference>
<dbReference type="GO" id="GO:0035999">
    <property type="term" value="P:tetrahydrofolate interconversion"/>
    <property type="evidence" value="ECO:0007669"/>
    <property type="project" value="UniProtKB-UniRule"/>
</dbReference>
<dbReference type="CDD" id="cd00477">
    <property type="entry name" value="FTHFS"/>
    <property type="match status" value="1"/>
</dbReference>
<dbReference type="FunFam" id="3.30.1510.10:FF:000001">
    <property type="entry name" value="Formate--tetrahydrofolate ligase"/>
    <property type="match status" value="1"/>
</dbReference>
<dbReference type="FunFam" id="3.10.410.10:FF:000001">
    <property type="entry name" value="Putative formate--tetrahydrofolate ligase"/>
    <property type="match status" value="1"/>
</dbReference>
<dbReference type="Gene3D" id="3.30.1510.10">
    <property type="entry name" value="Domain 2, N(10)-formyltetrahydrofolate synthetase"/>
    <property type="match status" value="1"/>
</dbReference>
<dbReference type="Gene3D" id="3.10.410.10">
    <property type="entry name" value="Formyltetrahydrofolate synthetase, domain 3"/>
    <property type="match status" value="1"/>
</dbReference>
<dbReference type="Gene3D" id="3.40.50.300">
    <property type="entry name" value="P-loop containing nucleotide triphosphate hydrolases"/>
    <property type="match status" value="1"/>
</dbReference>
<dbReference type="HAMAP" id="MF_01543">
    <property type="entry name" value="FTHFS"/>
    <property type="match status" value="1"/>
</dbReference>
<dbReference type="InterPro" id="IPR000559">
    <property type="entry name" value="Formate_THF_ligase"/>
</dbReference>
<dbReference type="InterPro" id="IPR020628">
    <property type="entry name" value="Formate_THF_ligase_CS"/>
</dbReference>
<dbReference type="InterPro" id="IPR027417">
    <property type="entry name" value="P-loop_NTPase"/>
</dbReference>
<dbReference type="NCBIfam" id="NF010030">
    <property type="entry name" value="PRK13505.1"/>
    <property type="match status" value="1"/>
</dbReference>
<dbReference type="Pfam" id="PF01268">
    <property type="entry name" value="FTHFS"/>
    <property type="match status" value="1"/>
</dbReference>
<dbReference type="SUPFAM" id="SSF52540">
    <property type="entry name" value="P-loop containing nucleoside triphosphate hydrolases"/>
    <property type="match status" value="1"/>
</dbReference>
<dbReference type="PROSITE" id="PS00721">
    <property type="entry name" value="FTHFS_1"/>
    <property type="match status" value="1"/>
</dbReference>
<dbReference type="PROSITE" id="PS00722">
    <property type="entry name" value="FTHFS_2"/>
    <property type="match status" value="1"/>
</dbReference>
<keyword id="KW-0067">ATP-binding</keyword>
<keyword id="KW-0436">Ligase</keyword>
<keyword id="KW-0547">Nucleotide-binding</keyword>
<keyword id="KW-0554">One-carbon metabolism</keyword>
<keyword id="KW-1185">Reference proteome</keyword>
<gene>
    <name evidence="1" type="primary">fhs</name>
    <name type="ordered locus">Emin_1052</name>
</gene>
<name>FTHS_ELUMP</name>
<feature type="chain" id="PRO_1000146682" description="Formate--tetrahydrofolate ligase">
    <location>
        <begin position="1"/>
        <end position="556"/>
    </location>
</feature>
<feature type="binding site" evidence="1">
    <location>
        <begin position="65"/>
        <end position="72"/>
    </location>
    <ligand>
        <name>ATP</name>
        <dbReference type="ChEBI" id="CHEBI:30616"/>
    </ligand>
</feature>